<accession>Q6FEM7</accession>
<name>NDK_ACIAD</name>
<organism>
    <name type="scientific">Acinetobacter baylyi (strain ATCC 33305 / BD413 / ADP1)</name>
    <dbReference type="NCBI Taxonomy" id="62977"/>
    <lineage>
        <taxon>Bacteria</taxon>
        <taxon>Pseudomonadati</taxon>
        <taxon>Pseudomonadota</taxon>
        <taxon>Gammaproteobacteria</taxon>
        <taxon>Moraxellales</taxon>
        <taxon>Moraxellaceae</taxon>
        <taxon>Acinetobacter</taxon>
    </lineage>
</organism>
<sequence>MAVERTLSIIKPDAVGKNHIGEIIARFEKAGLKPVAMKYKHLSQAEAEGFYAEHKERGFFADLVAFMTSGPVVVSALEGENAVLAHREILGATNPKEAAPGTIRADFATSIDENAAHGSDSVASAEREIAYFFAADEIFPRTR</sequence>
<evidence type="ECO:0000255" key="1">
    <source>
        <dbReference type="HAMAP-Rule" id="MF_00451"/>
    </source>
</evidence>
<comment type="function">
    <text evidence="1">Major role in the synthesis of nucleoside triphosphates other than ATP. The ATP gamma phosphate is transferred to the NDP beta phosphate via a ping-pong mechanism, using a phosphorylated active-site intermediate.</text>
</comment>
<comment type="catalytic activity">
    <reaction evidence="1">
        <text>a 2'-deoxyribonucleoside 5'-diphosphate + ATP = a 2'-deoxyribonucleoside 5'-triphosphate + ADP</text>
        <dbReference type="Rhea" id="RHEA:44640"/>
        <dbReference type="ChEBI" id="CHEBI:30616"/>
        <dbReference type="ChEBI" id="CHEBI:61560"/>
        <dbReference type="ChEBI" id="CHEBI:73316"/>
        <dbReference type="ChEBI" id="CHEBI:456216"/>
        <dbReference type="EC" id="2.7.4.6"/>
    </reaction>
</comment>
<comment type="catalytic activity">
    <reaction evidence="1">
        <text>a ribonucleoside 5'-diphosphate + ATP = a ribonucleoside 5'-triphosphate + ADP</text>
        <dbReference type="Rhea" id="RHEA:18113"/>
        <dbReference type="ChEBI" id="CHEBI:30616"/>
        <dbReference type="ChEBI" id="CHEBI:57930"/>
        <dbReference type="ChEBI" id="CHEBI:61557"/>
        <dbReference type="ChEBI" id="CHEBI:456216"/>
        <dbReference type="EC" id="2.7.4.6"/>
    </reaction>
</comment>
<comment type="cofactor">
    <cofactor evidence="1">
        <name>Mg(2+)</name>
        <dbReference type="ChEBI" id="CHEBI:18420"/>
    </cofactor>
</comment>
<comment type="subunit">
    <text evidence="1">Homotetramer.</text>
</comment>
<comment type="subcellular location">
    <subcellularLocation>
        <location evidence="1">Cytoplasm</location>
    </subcellularLocation>
</comment>
<comment type="similarity">
    <text evidence="1">Belongs to the NDK family.</text>
</comment>
<reference key="1">
    <citation type="journal article" date="2004" name="Nucleic Acids Res.">
        <title>Unique features revealed by the genome sequence of Acinetobacter sp. ADP1, a versatile and naturally transformation competent bacterium.</title>
        <authorList>
            <person name="Barbe V."/>
            <person name="Vallenet D."/>
            <person name="Fonknechten N."/>
            <person name="Kreimeyer A."/>
            <person name="Oztas S."/>
            <person name="Labarre L."/>
            <person name="Cruveiller S."/>
            <person name="Robert C."/>
            <person name="Duprat S."/>
            <person name="Wincker P."/>
            <person name="Ornston L.N."/>
            <person name="Weissenbach J."/>
            <person name="Marliere P."/>
            <person name="Cohen G.N."/>
            <person name="Medigue C."/>
        </authorList>
    </citation>
    <scope>NUCLEOTIDE SEQUENCE [LARGE SCALE GENOMIC DNA]</scope>
    <source>
        <strain>ATCC 33305 / BD413 / ADP1</strain>
    </source>
</reference>
<feature type="chain" id="PRO_0000136932" description="Nucleoside diphosphate kinase">
    <location>
        <begin position="1"/>
        <end position="143"/>
    </location>
</feature>
<feature type="active site" description="Pros-phosphohistidine intermediate" evidence="1">
    <location>
        <position position="117"/>
    </location>
</feature>
<feature type="binding site" evidence="1">
    <location>
        <position position="11"/>
    </location>
    <ligand>
        <name>ATP</name>
        <dbReference type="ChEBI" id="CHEBI:30616"/>
    </ligand>
</feature>
<feature type="binding site" evidence="1">
    <location>
        <position position="59"/>
    </location>
    <ligand>
        <name>ATP</name>
        <dbReference type="ChEBI" id="CHEBI:30616"/>
    </ligand>
</feature>
<feature type="binding site" evidence="1">
    <location>
        <position position="87"/>
    </location>
    <ligand>
        <name>ATP</name>
        <dbReference type="ChEBI" id="CHEBI:30616"/>
    </ligand>
</feature>
<feature type="binding site" evidence="1">
    <location>
        <position position="93"/>
    </location>
    <ligand>
        <name>ATP</name>
        <dbReference type="ChEBI" id="CHEBI:30616"/>
    </ligand>
</feature>
<feature type="binding site" evidence="1">
    <location>
        <position position="104"/>
    </location>
    <ligand>
        <name>ATP</name>
        <dbReference type="ChEBI" id="CHEBI:30616"/>
    </ligand>
</feature>
<feature type="binding site" evidence="1">
    <location>
        <position position="114"/>
    </location>
    <ligand>
        <name>ATP</name>
        <dbReference type="ChEBI" id="CHEBI:30616"/>
    </ligand>
</feature>
<dbReference type="EC" id="2.7.4.6" evidence="1"/>
<dbReference type="EMBL" id="CR543861">
    <property type="protein sequence ID" value="CAG67481.1"/>
    <property type="molecule type" value="Genomic_DNA"/>
</dbReference>
<dbReference type="RefSeq" id="WP_004920009.1">
    <property type="nucleotide sequence ID" value="NC_005966.1"/>
</dbReference>
<dbReference type="SMR" id="Q6FEM7"/>
<dbReference type="STRING" id="202950.GCA_001485005_00793"/>
<dbReference type="GeneID" id="45233034"/>
<dbReference type="KEGG" id="aci:ACIAD0556"/>
<dbReference type="eggNOG" id="COG0105">
    <property type="taxonomic scope" value="Bacteria"/>
</dbReference>
<dbReference type="HOGENOM" id="CLU_060216_8_1_6"/>
<dbReference type="OrthoDB" id="9801161at2"/>
<dbReference type="BioCyc" id="ASP62977:ACIAD_RS02530-MONOMER"/>
<dbReference type="Proteomes" id="UP000000430">
    <property type="component" value="Chromosome"/>
</dbReference>
<dbReference type="GO" id="GO:0005737">
    <property type="term" value="C:cytoplasm"/>
    <property type="evidence" value="ECO:0007669"/>
    <property type="project" value="UniProtKB-SubCell"/>
</dbReference>
<dbReference type="GO" id="GO:0005524">
    <property type="term" value="F:ATP binding"/>
    <property type="evidence" value="ECO:0007669"/>
    <property type="project" value="UniProtKB-UniRule"/>
</dbReference>
<dbReference type="GO" id="GO:0046872">
    <property type="term" value="F:metal ion binding"/>
    <property type="evidence" value="ECO:0007669"/>
    <property type="project" value="UniProtKB-KW"/>
</dbReference>
<dbReference type="GO" id="GO:0004550">
    <property type="term" value="F:nucleoside diphosphate kinase activity"/>
    <property type="evidence" value="ECO:0007669"/>
    <property type="project" value="UniProtKB-UniRule"/>
</dbReference>
<dbReference type="GO" id="GO:0006241">
    <property type="term" value="P:CTP biosynthetic process"/>
    <property type="evidence" value="ECO:0007669"/>
    <property type="project" value="UniProtKB-UniRule"/>
</dbReference>
<dbReference type="GO" id="GO:0006183">
    <property type="term" value="P:GTP biosynthetic process"/>
    <property type="evidence" value="ECO:0007669"/>
    <property type="project" value="UniProtKB-UniRule"/>
</dbReference>
<dbReference type="GO" id="GO:0006228">
    <property type="term" value="P:UTP biosynthetic process"/>
    <property type="evidence" value="ECO:0007669"/>
    <property type="project" value="UniProtKB-UniRule"/>
</dbReference>
<dbReference type="CDD" id="cd04413">
    <property type="entry name" value="NDPk_I"/>
    <property type="match status" value="1"/>
</dbReference>
<dbReference type="FunFam" id="3.30.70.141:FF:000001">
    <property type="entry name" value="Nucleoside diphosphate kinase"/>
    <property type="match status" value="1"/>
</dbReference>
<dbReference type="Gene3D" id="3.30.70.141">
    <property type="entry name" value="Nucleoside diphosphate kinase-like domain"/>
    <property type="match status" value="1"/>
</dbReference>
<dbReference type="HAMAP" id="MF_00451">
    <property type="entry name" value="NDP_kinase"/>
    <property type="match status" value="1"/>
</dbReference>
<dbReference type="InterPro" id="IPR034907">
    <property type="entry name" value="NDK-like_dom"/>
</dbReference>
<dbReference type="InterPro" id="IPR036850">
    <property type="entry name" value="NDK-like_dom_sf"/>
</dbReference>
<dbReference type="InterPro" id="IPR001564">
    <property type="entry name" value="Nucleoside_diP_kinase"/>
</dbReference>
<dbReference type="InterPro" id="IPR023005">
    <property type="entry name" value="Nucleoside_diP_kinase_AS"/>
</dbReference>
<dbReference type="NCBIfam" id="NF001908">
    <property type="entry name" value="PRK00668.1"/>
    <property type="match status" value="1"/>
</dbReference>
<dbReference type="PANTHER" id="PTHR11349">
    <property type="entry name" value="NUCLEOSIDE DIPHOSPHATE KINASE"/>
    <property type="match status" value="1"/>
</dbReference>
<dbReference type="Pfam" id="PF00334">
    <property type="entry name" value="NDK"/>
    <property type="match status" value="1"/>
</dbReference>
<dbReference type="PRINTS" id="PR01243">
    <property type="entry name" value="NUCDPKINASE"/>
</dbReference>
<dbReference type="SMART" id="SM00562">
    <property type="entry name" value="NDK"/>
    <property type="match status" value="1"/>
</dbReference>
<dbReference type="SUPFAM" id="SSF54919">
    <property type="entry name" value="Nucleoside diphosphate kinase, NDK"/>
    <property type="match status" value="1"/>
</dbReference>
<dbReference type="PROSITE" id="PS00469">
    <property type="entry name" value="NDPK"/>
    <property type="match status" value="1"/>
</dbReference>
<dbReference type="PROSITE" id="PS51374">
    <property type="entry name" value="NDPK_LIKE"/>
    <property type="match status" value="1"/>
</dbReference>
<keyword id="KW-0067">ATP-binding</keyword>
<keyword id="KW-0963">Cytoplasm</keyword>
<keyword id="KW-0418">Kinase</keyword>
<keyword id="KW-0460">Magnesium</keyword>
<keyword id="KW-0479">Metal-binding</keyword>
<keyword id="KW-0546">Nucleotide metabolism</keyword>
<keyword id="KW-0547">Nucleotide-binding</keyword>
<keyword id="KW-0597">Phosphoprotein</keyword>
<keyword id="KW-0808">Transferase</keyword>
<gene>
    <name evidence="1" type="primary">ndk</name>
    <name type="ordered locus">ACIAD0556</name>
</gene>
<protein>
    <recommendedName>
        <fullName evidence="1">Nucleoside diphosphate kinase</fullName>
        <shortName evidence="1">NDK</shortName>
        <shortName evidence="1">NDP kinase</shortName>
        <ecNumber evidence="1">2.7.4.6</ecNumber>
    </recommendedName>
    <alternativeName>
        <fullName evidence="1">Nucleoside-2-P kinase</fullName>
    </alternativeName>
</protein>
<proteinExistence type="inferred from homology"/>